<reference key="1">
    <citation type="journal article" date="2002" name="Nucleic Acids Res.">
        <title>The complete genomic sequence of Mycoplasma penetrans, an intracellular bacterial pathogen in humans.</title>
        <authorList>
            <person name="Sasaki Y."/>
            <person name="Ishikawa J."/>
            <person name="Yamashita A."/>
            <person name="Oshima K."/>
            <person name="Kenri T."/>
            <person name="Furuya K."/>
            <person name="Yoshino C."/>
            <person name="Horino A."/>
            <person name="Shiba T."/>
            <person name="Sasaki T."/>
            <person name="Hattori M."/>
        </authorList>
    </citation>
    <scope>NUCLEOTIDE SEQUENCE [LARGE SCALE GENOMIC DNA]</scope>
    <source>
        <strain>HF-2</strain>
    </source>
</reference>
<evidence type="ECO:0000255" key="1">
    <source>
        <dbReference type="HAMAP-Rule" id="MF_01310"/>
    </source>
</evidence>
<evidence type="ECO:0000256" key="2">
    <source>
        <dbReference type="SAM" id="MobiDB-lite"/>
    </source>
</evidence>
<evidence type="ECO:0000305" key="3"/>
<organism>
    <name type="scientific">Malacoplasma penetrans (strain HF-2)</name>
    <name type="common">Mycoplasma penetrans</name>
    <dbReference type="NCBI Taxonomy" id="272633"/>
    <lineage>
        <taxon>Bacteria</taxon>
        <taxon>Bacillati</taxon>
        <taxon>Mycoplasmatota</taxon>
        <taxon>Mycoplasmoidales</taxon>
        <taxon>Mycoplasmoidaceae</taxon>
        <taxon>Malacoplasma</taxon>
    </lineage>
</organism>
<gene>
    <name evidence="1" type="primary">rpsK</name>
    <name type="ordered locus">MYPE9930</name>
</gene>
<feature type="chain" id="PRO_0000123181" description="Small ribosomal subunit protein uS11">
    <location>
        <begin position="1"/>
        <end position="123"/>
    </location>
</feature>
<feature type="region of interest" description="Disordered" evidence="2">
    <location>
        <begin position="1"/>
        <end position="22"/>
    </location>
</feature>
<accession>P59372</accession>
<proteinExistence type="inferred from homology"/>
<comment type="function">
    <text evidence="1">Located on the platform of the 30S subunit, it bridges several disparate RNA helices of the 16S rRNA. Forms part of the Shine-Dalgarno cleft in the 70S ribosome.</text>
</comment>
<comment type="subunit">
    <text evidence="1">Part of the 30S ribosomal subunit. Interacts with proteins S7 and S18. Binds to IF-3.</text>
</comment>
<comment type="similarity">
    <text evidence="1">Belongs to the universal ribosomal protein uS11 family.</text>
</comment>
<dbReference type="EMBL" id="BA000026">
    <property type="protein sequence ID" value="BAC44779.1"/>
    <property type="molecule type" value="Genomic_DNA"/>
</dbReference>
<dbReference type="RefSeq" id="WP_011077807.1">
    <property type="nucleotide sequence ID" value="NC_004432.1"/>
</dbReference>
<dbReference type="SMR" id="P59372"/>
<dbReference type="FunCoup" id="P59372">
    <property type="interactions" value="261"/>
</dbReference>
<dbReference type="STRING" id="272633.gene:10732113"/>
<dbReference type="KEGG" id="mpe:MYPE9930"/>
<dbReference type="eggNOG" id="COG0100">
    <property type="taxonomic scope" value="Bacteria"/>
</dbReference>
<dbReference type="HOGENOM" id="CLU_072439_5_0_14"/>
<dbReference type="InParanoid" id="P59372"/>
<dbReference type="Proteomes" id="UP000002522">
    <property type="component" value="Chromosome"/>
</dbReference>
<dbReference type="GO" id="GO:1990904">
    <property type="term" value="C:ribonucleoprotein complex"/>
    <property type="evidence" value="ECO:0007669"/>
    <property type="project" value="UniProtKB-KW"/>
</dbReference>
<dbReference type="GO" id="GO:0005840">
    <property type="term" value="C:ribosome"/>
    <property type="evidence" value="ECO:0007669"/>
    <property type="project" value="UniProtKB-KW"/>
</dbReference>
<dbReference type="GO" id="GO:0019843">
    <property type="term" value="F:rRNA binding"/>
    <property type="evidence" value="ECO:0007669"/>
    <property type="project" value="UniProtKB-UniRule"/>
</dbReference>
<dbReference type="GO" id="GO:0003735">
    <property type="term" value="F:structural constituent of ribosome"/>
    <property type="evidence" value="ECO:0007669"/>
    <property type="project" value="InterPro"/>
</dbReference>
<dbReference type="GO" id="GO:0006412">
    <property type="term" value="P:translation"/>
    <property type="evidence" value="ECO:0007669"/>
    <property type="project" value="UniProtKB-UniRule"/>
</dbReference>
<dbReference type="FunFam" id="3.30.420.80:FF:000010">
    <property type="entry name" value="30S ribosomal protein S11"/>
    <property type="match status" value="1"/>
</dbReference>
<dbReference type="Gene3D" id="3.30.420.80">
    <property type="entry name" value="Ribosomal protein S11"/>
    <property type="match status" value="1"/>
</dbReference>
<dbReference type="HAMAP" id="MF_01310">
    <property type="entry name" value="Ribosomal_uS11"/>
    <property type="match status" value="1"/>
</dbReference>
<dbReference type="InterPro" id="IPR001971">
    <property type="entry name" value="Ribosomal_uS11"/>
</dbReference>
<dbReference type="InterPro" id="IPR019981">
    <property type="entry name" value="Ribosomal_uS11_bac-type"/>
</dbReference>
<dbReference type="InterPro" id="IPR018102">
    <property type="entry name" value="Ribosomal_uS11_CS"/>
</dbReference>
<dbReference type="InterPro" id="IPR036967">
    <property type="entry name" value="Ribosomal_uS11_sf"/>
</dbReference>
<dbReference type="NCBIfam" id="NF003698">
    <property type="entry name" value="PRK05309.1"/>
    <property type="match status" value="1"/>
</dbReference>
<dbReference type="NCBIfam" id="TIGR03632">
    <property type="entry name" value="uS11_bact"/>
    <property type="match status" value="1"/>
</dbReference>
<dbReference type="PANTHER" id="PTHR11759">
    <property type="entry name" value="40S RIBOSOMAL PROTEIN S14/30S RIBOSOMAL PROTEIN S11"/>
    <property type="match status" value="1"/>
</dbReference>
<dbReference type="Pfam" id="PF00411">
    <property type="entry name" value="Ribosomal_S11"/>
    <property type="match status" value="1"/>
</dbReference>
<dbReference type="PIRSF" id="PIRSF002131">
    <property type="entry name" value="Ribosomal_S11"/>
    <property type="match status" value="1"/>
</dbReference>
<dbReference type="SUPFAM" id="SSF53137">
    <property type="entry name" value="Translational machinery components"/>
    <property type="match status" value="1"/>
</dbReference>
<dbReference type="PROSITE" id="PS00054">
    <property type="entry name" value="RIBOSOMAL_S11"/>
    <property type="match status" value="1"/>
</dbReference>
<name>RS11_MALP2</name>
<protein>
    <recommendedName>
        <fullName evidence="1">Small ribosomal subunit protein uS11</fullName>
    </recommendedName>
    <alternativeName>
        <fullName evidence="3">30S ribosomal protein S11</fullName>
    </alternativeName>
</protein>
<sequence length="123" mass="12737">MAKKRKKKLSSPEGISHIHASANNTIVTLTNTGGDAITWSSSGSIGYKGSKKSTPYAAGIAAETAAKVAIDLGLKKVIVKVNGTGSGKDTAIRSLHAAGLEISEIHDVTPIPHNGCRPPKKPR</sequence>
<keyword id="KW-1185">Reference proteome</keyword>
<keyword id="KW-0687">Ribonucleoprotein</keyword>
<keyword id="KW-0689">Ribosomal protein</keyword>
<keyword id="KW-0694">RNA-binding</keyword>
<keyword id="KW-0699">rRNA-binding</keyword>